<accession>B1Y9T9</accession>
<keyword id="KW-0687">Ribonucleoprotein</keyword>
<keyword id="KW-0689">Ribosomal protein</keyword>
<organism>
    <name type="scientific">Pyrobaculum neutrophilum (strain DSM 2338 / JCM 9278 / NBRC 100436 / V24Sta)</name>
    <name type="common">Thermoproteus neutrophilus</name>
    <dbReference type="NCBI Taxonomy" id="444157"/>
    <lineage>
        <taxon>Archaea</taxon>
        <taxon>Thermoproteota</taxon>
        <taxon>Thermoprotei</taxon>
        <taxon>Thermoproteales</taxon>
        <taxon>Thermoproteaceae</taxon>
        <taxon>Pyrobaculum</taxon>
    </lineage>
</organism>
<proteinExistence type="inferred from homology"/>
<dbReference type="EMBL" id="CP001014">
    <property type="protein sequence ID" value="ACB40489.1"/>
    <property type="molecule type" value="Genomic_DNA"/>
</dbReference>
<dbReference type="RefSeq" id="WP_012350908.1">
    <property type="nucleotide sequence ID" value="NC_010525.1"/>
</dbReference>
<dbReference type="SMR" id="B1Y9T9"/>
<dbReference type="STRING" id="444157.Tneu_1565"/>
<dbReference type="GeneID" id="6165071"/>
<dbReference type="KEGG" id="tne:Tneu_1565"/>
<dbReference type="eggNOG" id="arCOG04154">
    <property type="taxonomic scope" value="Archaea"/>
</dbReference>
<dbReference type="HOGENOM" id="CLU_080597_2_1_2"/>
<dbReference type="OrthoDB" id="372305at2157"/>
<dbReference type="Proteomes" id="UP000001694">
    <property type="component" value="Chromosome"/>
</dbReference>
<dbReference type="GO" id="GO:1990904">
    <property type="term" value="C:ribonucleoprotein complex"/>
    <property type="evidence" value="ECO:0007669"/>
    <property type="project" value="UniProtKB-KW"/>
</dbReference>
<dbReference type="GO" id="GO:0005840">
    <property type="term" value="C:ribosome"/>
    <property type="evidence" value="ECO:0007669"/>
    <property type="project" value="UniProtKB-KW"/>
</dbReference>
<dbReference type="GO" id="GO:0003735">
    <property type="term" value="F:structural constituent of ribosome"/>
    <property type="evidence" value="ECO:0007669"/>
    <property type="project" value="InterPro"/>
</dbReference>
<dbReference type="GO" id="GO:0006412">
    <property type="term" value="P:translation"/>
    <property type="evidence" value="ECO:0007669"/>
    <property type="project" value="UniProtKB-UniRule"/>
</dbReference>
<dbReference type="CDD" id="cd11382">
    <property type="entry name" value="Ribosomal_S8e"/>
    <property type="match status" value="1"/>
</dbReference>
<dbReference type="FunFam" id="2.40.10.310:FF:000002">
    <property type="entry name" value="30S ribosomal protein S8e"/>
    <property type="match status" value="1"/>
</dbReference>
<dbReference type="Gene3D" id="2.40.10.310">
    <property type="match status" value="1"/>
</dbReference>
<dbReference type="HAMAP" id="MF_00029">
    <property type="entry name" value="Ribosomal_eS8"/>
    <property type="match status" value="1"/>
</dbReference>
<dbReference type="InterPro" id="IPR001047">
    <property type="entry name" value="Ribosomal_eS8"/>
</dbReference>
<dbReference type="InterPro" id="IPR018283">
    <property type="entry name" value="Ribosomal_eS8_CS"/>
</dbReference>
<dbReference type="InterPro" id="IPR020919">
    <property type="entry name" value="Ribosomal_protein_eS8_arc"/>
</dbReference>
<dbReference type="InterPro" id="IPR022309">
    <property type="entry name" value="Ribosomal_Se8/biogenesis_NSA2"/>
</dbReference>
<dbReference type="NCBIfam" id="TIGR00307">
    <property type="entry name" value="eS8"/>
    <property type="match status" value="1"/>
</dbReference>
<dbReference type="PANTHER" id="PTHR10394">
    <property type="entry name" value="40S RIBOSOMAL PROTEIN S8"/>
    <property type="match status" value="1"/>
</dbReference>
<dbReference type="Pfam" id="PF01201">
    <property type="entry name" value="Ribosomal_S8e"/>
    <property type="match status" value="1"/>
</dbReference>
<dbReference type="PROSITE" id="PS01193">
    <property type="entry name" value="RIBOSOMAL_S8E"/>
    <property type="match status" value="1"/>
</dbReference>
<reference key="1">
    <citation type="submission" date="2008-03" db="EMBL/GenBank/DDBJ databases">
        <title>Complete sequence of Thermoproteus neutrophilus V24Sta.</title>
        <authorList>
            <consortium name="US DOE Joint Genome Institute"/>
            <person name="Copeland A."/>
            <person name="Lucas S."/>
            <person name="Lapidus A."/>
            <person name="Glavina del Rio T."/>
            <person name="Dalin E."/>
            <person name="Tice H."/>
            <person name="Bruce D."/>
            <person name="Goodwin L."/>
            <person name="Pitluck S."/>
            <person name="Sims D."/>
            <person name="Brettin T."/>
            <person name="Detter J.C."/>
            <person name="Han C."/>
            <person name="Kuske C.R."/>
            <person name="Schmutz J."/>
            <person name="Larimer F."/>
            <person name="Land M."/>
            <person name="Hauser L."/>
            <person name="Kyrpides N."/>
            <person name="Mikhailova N."/>
            <person name="Biddle J.F."/>
            <person name="Zhang Z."/>
            <person name="Fitz-Gibbon S.T."/>
            <person name="Lowe T.M."/>
            <person name="Saltikov C."/>
            <person name="House C.H."/>
            <person name="Richardson P."/>
        </authorList>
    </citation>
    <scope>NUCLEOTIDE SEQUENCE [LARGE SCALE GENOMIC DNA]</scope>
    <source>
        <strain>DSM 2338 / JCM 9278 / NBRC 100436 / V24Sta</strain>
    </source>
</reference>
<gene>
    <name evidence="1" type="primary">rps8e</name>
    <name type="ordered locus">Tneu_1565</name>
</gene>
<protein>
    <recommendedName>
        <fullName evidence="1">Small ribosomal subunit protein eS8</fullName>
    </recommendedName>
    <alternativeName>
        <fullName evidence="3">30S ribosomal protein S8e</fullName>
    </alternativeName>
</protein>
<evidence type="ECO:0000255" key="1">
    <source>
        <dbReference type="HAMAP-Rule" id="MF_00029"/>
    </source>
</evidence>
<evidence type="ECO:0000256" key="2">
    <source>
        <dbReference type="SAM" id="MobiDB-lite"/>
    </source>
</evidence>
<evidence type="ECO:0000305" key="3"/>
<sequence>MKLGAFYKGGDLKKPSGGKKRRVRRTKKKALGGGPPQIPKLGENDVRVVERVRGGNIKVRMREARFANVYVPKEKRYVKARIVSIVSTPANPDYARRNFIVKGAVIQTEVGKAVVTSRPGQDGVINAVLIE</sequence>
<name>RS8E_PYRNV</name>
<feature type="chain" id="PRO_1000090257" description="Small ribosomal subunit protein eS8">
    <location>
        <begin position="1"/>
        <end position="131"/>
    </location>
</feature>
<feature type="region of interest" description="Disordered" evidence="2">
    <location>
        <begin position="1"/>
        <end position="37"/>
    </location>
</feature>
<feature type="compositionally biased region" description="Basic residues" evidence="2">
    <location>
        <begin position="16"/>
        <end position="30"/>
    </location>
</feature>
<comment type="subunit">
    <text evidence="1">Part of the 30S ribosomal subunit.</text>
</comment>
<comment type="similarity">
    <text evidence="1">Belongs to the eukaryotic ribosomal protein eS8 family.</text>
</comment>